<keyword id="KW-0067">ATP-binding</keyword>
<keyword id="KW-0963">Cytoplasm</keyword>
<keyword id="KW-0256">Endoplasmic reticulum</keyword>
<keyword id="KW-0378">Hydrolase</keyword>
<keyword id="KW-0479">Metal-binding</keyword>
<keyword id="KW-0547">Nucleotide-binding</keyword>
<keyword id="KW-1185">Reference proteome</keyword>
<keyword id="KW-0813">Transport</keyword>
<keyword id="KW-0862">Zinc</keyword>
<sequence>MSTALIDVDSMEPSLQSILDQKSLRWIFVGGKGGVGKTTTSCSLAIQLAKVRRSVLLISTDPAHNLSDAFSQKFGKEARLIDGFTNLSAMEIDPNGSMQDLLAGQGADEGGAAADGMAGMGGMMQDLAFAIPGIDEAMSFAEVLKQVKSLSYETIIFDTAPTGHTLRFLQFPSVLEKALAKVSQLSSQYGPLLNGFLGGQGQLPNGQSLPEMMEKLEQLRETISEVNTQFKDENLTTFVCVCIAEFLSLYETERMIQELASYNIDTHCIVVNQLLFPKKGSKCDHCDARRRMQKKYLDQIEELYDEFNVVKMPMLIEEVRGKEKLEKFSEMLVKPYVPPEADE</sequence>
<accession>A4QUI2</accession>
<accession>G4N1C7</accession>
<name>GET3_PYRO7</name>
<proteinExistence type="inferred from homology"/>
<evidence type="ECO:0000255" key="1">
    <source>
        <dbReference type="HAMAP-Rule" id="MF_03112"/>
    </source>
</evidence>
<dbReference type="EC" id="3.6.-.-" evidence="1"/>
<dbReference type="EMBL" id="CM001233">
    <property type="protein sequence ID" value="EHA52398.1"/>
    <property type="molecule type" value="Genomic_DNA"/>
</dbReference>
<dbReference type="RefSeq" id="XP_003712205.1">
    <property type="nucleotide sequence ID" value="XM_003712157.1"/>
</dbReference>
<dbReference type="SMR" id="A4QUI2"/>
<dbReference type="FunCoup" id="A4QUI2">
    <property type="interactions" value="973"/>
</dbReference>
<dbReference type="STRING" id="242507.A4QUI2"/>
<dbReference type="EnsemblFungi" id="MGG_09535T0">
    <property type="protein sequence ID" value="MGG_09535T0"/>
    <property type="gene ID" value="MGG_09535"/>
</dbReference>
<dbReference type="GeneID" id="2680490"/>
<dbReference type="KEGG" id="mgr:MGG_09535"/>
<dbReference type="VEuPathDB" id="FungiDB:MGG_09535"/>
<dbReference type="eggNOG" id="KOG2825">
    <property type="taxonomic scope" value="Eukaryota"/>
</dbReference>
<dbReference type="HOGENOM" id="CLU_040761_0_0_1"/>
<dbReference type="InParanoid" id="A4QUI2"/>
<dbReference type="OMA" id="MDAPYEF"/>
<dbReference type="OrthoDB" id="1770at2759"/>
<dbReference type="Proteomes" id="UP000009058">
    <property type="component" value="Chromosome 3"/>
</dbReference>
<dbReference type="GO" id="GO:0043529">
    <property type="term" value="C:GET complex"/>
    <property type="evidence" value="ECO:0007669"/>
    <property type="project" value="EnsemblFungi"/>
</dbReference>
<dbReference type="GO" id="GO:0005524">
    <property type="term" value="F:ATP binding"/>
    <property type="evidence" value="ECO:0007669"/>
    <property type="project" value="UniProtKB-UniRule"/>
</dbReference>
<dbReference type="GO" id="GO:0016887">
    <property type="term" value="F:ATP hydrolysis activity"/>
    <property type="evidence" value="ECO:0007669"/>
    <property type="project" value="EnsemblFungi"/>
</dbReference>
<dbReference type="GO" id="GO:0005085">
    <property type="term" value="F:guanyl-nucleotide exchange factor activity"/>
    <property type="evidence" value="ECO:0007669"/>
    <property type="project" value="EnsemblFungi"/>
</dbReference>
<dbReference type="GO" id="GO:0042802">
    <property type="term" value="F:identical protein binding"/>
    <property type="evidence" value="ECO:0007669"/>
    <property type="project" value="EnsemblFungi"/>
</dbReference>
<dbReference type="GO" id="GO:0046872">
    <property type="term" value="F:metal ion binding"/>
    <property type="evidence" value="ECO:0007669"/>
    <property type="project" value="UniProtKB-KW"/>
</dbReference>
<dbReference type="GO" id="GO:0044183">
    <property type="term" value="F:protein folding chaperone"/>
    <property type="evidence" value="ECO:0007669"/>
    <property type="project" value="EnsemblFungi"/>
</dbReference>
<dbReference type="GO" id="GO:0051082">
    <property type="term" value="F:unfolded protein binding"/>
    <property type="evidence" value="ECO:0007669"/>
    <property type="project" value="EnsemblFungi"/>
</dbReference>
<dbReference type="GO" id="GO:0034599">
    <property type="term" value="P:cellular response to oxidative stress"/>
    <property type="evidence" value="ECO:0007669"/>
    <property type="project" value="EnsemblFungi"/>
</dbReference>
<dbReference type="GO" id="GO:0000750">
    <property type="term" value="P:pheromone-dependent signal transduction involved in conjugation with cellular fusion"/>
    <property type="evidence" value="ECO:0007669"/>
    <property type="project" value="EnsemblFungi"/>
</dbReference>
<dbReference type="GO" id="GO:0006620">
    <property type="term" value="P:post-translational protein targeting to endoplasmic reticulum membrane"/>
    <property type="evidence" value="ECO:0007669"/>
    <property type="project" value="EnsemblFungi"/>
</dbReference>
<dbReference type="GO" id="GO:0009408">
    <property type="term" value="P:response to heat"/>
    <property type="evidence" value="ECO:0007669"/>
    <property type="project" value="EnsemblFungi"/>
</dbReference>
<dbReference type="GO" id="GO:0010038">
    <property type="term" value="P:response to metal ion"/>
    <property type="evidence" value="ECO:0007669"/>
    <property type="project" value="EnsemblFungi"/>
</dbReference>
<dbReference type="GO" id="GO:0006890">
    <property type="term" value="P:retrograde vesicle-mediated transport, Golgi to endoplasmic reticulum"/>
    <property type="evidence" value="ECO:0007669"/>
    <property type="project" value="EnsemblFungi"/>
</dbReference>
<dbReference type="GO" id="GO:0071816">
    <property type="term" value="P:tail-anchored membrane protein insertion into ER membrane"/>
    <property type="evidence" value="ECO:0007669"/>
    <property type="project" value="EnsemblFungi"/>
</dbReference>
<dbReference type="CDD" id="cd02035">
    <property type="entry name" value="ArsA"/>
    <property type="match status" value="1"/>
</dbReference>
<dbReference type="FunFam" id="3.40.50.300:FF:000235">
    <property type="entry name" value="ATPase ASNA1"/>
    <property type="match status" value="1"/>
</dbReference>
<dbReference type="Gene3D" id="3.40.50.300">
    <property type="entry name" value="P-loop containing nucleotide triphosphate hydrolases"/>
    <property type="match status" value="1"/>
</dbReference>
<dbReference type="HAMAP" id="MF_03112">
    <property type="entry name" value="Asna1_Get3"/>
    <property type="match status" value="1"/>
</dbReference>
<dbReference type="InterPro" id="IPR025723">
    <property type="entry name" value="Anion-transp_ATPase-like_dom"/>
</dbReference>
<dbReference type="InterPro" id="IPR016300">
    <property type="entry name" value="ATPase_ArsA/GET3"/>
</dbReference>
<dbReference type="InterPro" id="IPR027542">
    <property type="entry name" value="ATPase_ArsA/GET3_euk"/>
</dbReference>
<dbReference type="InterPro" id="IPR027417">
    <property type="entry name" value="P-loop_NTPase"/>
</dbReference>
<dbReference type="NCBIfam" id="TIGR00345">
    <property type="entry name" value="GET3_arsA_TRC40"/>
    <property type="match status" value="1"/>
</dbReference>
<dbReference type="PANTHER" id="PTHR10803">
    <property type="entry name" value="ARSENICAL PUMP-DRIVING ATPASE ARSENITE-TRANSLOCATING ATPASE"/>
    <property type="match status" value="1"/>
</dbReference>
<dbReference type="PANTHER" id="PTHR10803:SF3">
    <property type="entry name" value="ATPASE GET3"/>
    <property type="match status" value="1"/>
</dbReference>
<dbReference type="Pfam" id="PF02374">
    <property type="entry name" value="ArsA_ATPase"/>
    <property type="match status" value="1"/>
</dbReference>
<dbReference type="SUPFAM" id="SSF52540">
    <property type="entry name" value="P-loop containing nucleoside triphosphate hydrolases"/>
    <property type="match status" value="1"/>
</dbReference>
<reference key="1">
    <citation type="journal article" date="2005" name="Nature">
        <title>The genome sequence of the rice blast fungus Magnaporthe grisea.</title>
        <authorList>
            <person name="Dean R.A."/>
            <person name="Talbot N.J."/>
            <person name="Ebbole D.J."/>
            <person name="Farman M.L."/>
            <person name="Mitchell T.K."/>
            <person name="Orbach M.J."/>
            <person name="Thon M.R."/>
            <person name="Kulkarni R."/>
            <person name="Xu J.-R."/>
            <person name="Pan H."/>
            <person name="Read N.D."/>
            <person name="Lee Y.-H."/>
            <person name="Carbone I."/>
            <person name="Brown D."/>
            <person name="Oh Y.Y."/>
            <person name="Donofrio N."/>
            <person name="Jeong J.S."/>
            <person name="Soanes D.M."/>
            <person name="Djonovic S."/>
            <person name="Kolomiets E."/>
            <person name="Rehmeyer C."/>
            <person name="Li W."/>
            <person name="Harding M."/>
            <person name="Kim S."/>
            <person name="Lebrun M.-H."/>
            <person name="Bohnert H."/>
            <person name="Coughlan S."/>
            <person name="Butler J."/>
            <person name="Calvo S.E."/>
            <person name="Ma L.-J."/>
            <person name="Nicol R."/>
            <person name="Purcell S."/>
            <person name="Nusbaum C."/>
            <person name="Galagan J.E."/>
            <person name="Birren B.W."/>
        </authorList>
    </citation>
    <scope>NUCLEOTIDE SEQUENCE [LARGE SCALE GENOMIC DNA]</scope>
    <source>
        <strain>70-15 / ATCC MYA-4617 / FGSC 8958</strain>
    </source>
</reference>
<gene>
    <name evidence="1" type="primary">GET3</name>
    <name type="ORF">MGG_09535</name>
</gene>
<protein>
    <recommendedName>
        <fullName evidence="1">ATPase GET3</fullName>
        <ecNumber evidence="1">3.6.-.-</ecNumber>
    </recommendedName>
    <alternativeName>
        <fullName evidence="1">Arsenical pump-driving ATPase</fullName>
    </alternativeName>
    <alternativeName>
        <fullName evidence="1">Arsenite-stimulated ATPase</fullName>
    </alternativeName>
    <alternativeName>
        <fullName evidence="1">Golgi to ER traffic protein 3</fullName>
    </alternativeName>
    <alternativeName>
        <fullName evidence="1">Guided entry of tail-anchored proteins 3</fullName>
    </alternativeName>
</protein>
<comment type="function">
    <text evidence="1">ATPase required for the post-translational delivery of tail-anchored (TA) proteins to the endoplasmic reticulum. Recognizes and selectively binds the transmembrane domain of TA proteins in the cytosol. This complex then targets to the endoplasmic reticulum by membrane-bound receptors, where the tail-anchored protein is released for insertion. This process is regulated by ATP binding and hydrolysis. ATP binding drives the homodimer towards the closed dimer state, facilitating recognition of newly synthesized TA membrane proteins. ATP hydrolysis is required for insertion. Subsequently, the homodimer reverts towards the open dimer state, lowering its affinity for the membrane-bound receptor, and returning it to the cytosol to initiate a new round of targeting.</text>
</comment>
<comment type="subunit">
    <text evidence="1">Homodimer.</text>
</comment>
<comment type="subcellular location">
    <subcellularLocation>
        <location evidence="1">Cytoplasm</location>
    </subcellularLocation>
    <subcellularLocation>
        <location evidence="1">Endoplasmic reticulum</location>
    </subcellularLocation>
</comment>
<comment type="similarity">
    <text evidence="1">Belongs to the arsA ATPase family.</text>
</comment>
<organism>
    <name type="scientific">Pyricularia oryzae (strain 70-15 / ATCC MYA-4617 / FGSC 8958)</name>
    <name type="common">Rice blast fungus</name>
    <name type="synonym">Magnaporthe oryzae</name>
    <dbReference type="NCBI Taxonomy" id="242507"/>
    <lineage>
        <taxon>Eukaryota</taxon>
        <taxon>Fungi</taxon>
        <taxon>Dikarya</taxon>
        <taxon>Ascomycota</taxon>
        <taxon>Pezizomycotina</taxon>
        <taxon>Sordariomycetes</taxon>
        <taxon>Sordariomycetidae</taxon>
        <taxon>Magnaporthales</taxon>
        <taxon>Pyriculariaceae</taxon>
        <taxon>Pyricularia</taxon>
    </lineage>
</organism>
<feature type="chain" id="PRO_0000388212" description="ATPase GET3">
    <location>
        <begin position="1"/>
        <end position="343"/>
    </location>
</feature>
<feature type="active site" evidence="1">
    <location>
        <position position="61"/>
    </location>
</feature>
<feature type="binding site" evidence="1">
    <location>
        <begin position="32"/>
        <end position="39"/>
    </location>
    <ligand>
        <name>ATP</name>
        <dbReference type="ChEBI" id="CHEBI:30616"/>
    </ligand>
</feature>
<feature type="binding site" evidence="1">
    <location>
        <position position="245"/>
    </location>
    <ligand>
        <name>ATP</name>
        <dbReference type="ChEBI" id="CHEBI:30616"/>
    </ligand>
</feature>
<feature type="binding site" evidence="1">
    <location>
        <position position="272"/>
    </location>
    <ligand>
        <name>ATP</name>
        <dbReference type="ChEBI" id="CHEBI:30616"/>
    </ligand>
</feature>
<feature type="binding site" evidence="1">
    <location>
        <position position="283"/>
    </location>
    <ligand>
        <name>Zn(2+)</name>
        <dbReference type="ChEBI" id="CHEBI:29105"/>
        <note>ligand shared between dimeric partners</note>
    </ligand>
</feature>
<feature type="binding site" evidence="1">
    <location>
        <position position="286"/>
    </location>
    <ligand>
        <name>Zn(2+)</name>
        <dbReference type="ChEBI" id="CHEBI:29105"/>
        <note>ligand shared between dimeric partners</note>
    </ligand>
</feature>